<evidence type="ECO:0000255" key="1">
    <source>
        <dbReference type="HAMAP-Rule" id="MF_01315"/>
    </source>
</evidence>
<evidence type="ECO:0000256" key="2">
    <source>
        <dbReference type="SAM" id="MobiDB-lite"/>
    </source>
</evidence>
<evidence type="ECO:0000305" key="3"/>
<name>RS13_SHEDO</name>
<reference key="1">
    <citation type="submission" date="2006-03" db="EMBL/GenBank/DDBJ databases">
        <title>Complete sequence of Shewanella denitrificans OS217.</title>
        <authorList>
            <consortium name="US DOE Joint Genome Institute"/>
            <person name="Copeland A."/>
            <person name="Lucas S."/>
            <person name="Lapidus A."/>
            <person name="Barry K."/>
            <person name="Detter J.C."/>
            <person name="Glavina del Rio T."/>
            <person name="Hammon N."/>
            <person name="Israni S."/>
            <person name="Dalin E."/>
            <person name="Tice H."/>
            <person name="Pitluck S."/>
            <person name="Brettin T."/>
            <person name="Bruce D."/>
            <person name="Han C."/>
            <person name="Tapia R."/>
            <person name="Gilna P."/>
            <person name="Kiss H."/>
            <person name="Schmutz J."/>
            <person name="Larimer F."/>
            <person name="Land M."/>
            <person name="Hauser L."/>
            <person name="Kyrpides N."/>
            <person name="Lykidis A."/>
            <person name="Richardson P."/>
        </authorList>
    </citation>
    <scope>NUCLEOTIDE SEQUENCE [LARGE SCALE GENOMIC DNA]</scope>
    <source>
        <strain>OS217 / ATCC BAA-1090 / DSM 15013</strain>
    </source>
</reference>
<keyword id="KW-1185">Reference proteome</keyword>
<keyword id="KW-0687">Ribonucleoprotein</keyword>
<keyword id="KW-0689">Ribosomal protein</keyword>
<keyword id="KW-0694">RNA-binding</keyword>
<keyword id="KW-0699">rRNA-binding</keyword>
<keyword id="KW-0820">tRNA-binding</keyword>
<organism>
    <name type="scientific">Shewanella denitrificans (strain OS217 / ATCC BAA-1090 / DSM 15013)</name>
    <dbReference type="NCBI Taxonomy" id="318161"/>
    <lineage>
        <taxon>Bacteria</taxon>
        <taxon>Pseudomonadati</taxon>
        <taxon>Pseudomonadota</taxon>
        <taxon>Gammaproteobacteria</taxon>
        <taxon>Alteromonadales</taxon>
        <taxon>Shewanellaceae</taxon>
        <taxon>Shewanella</taxon>
    </lineage>
</organism>
<feature type="chain" id="PRO_0000306703" description="Small ribosomal subunit protein uS13">
    <location>
        <begin position="1"/>
        <end position="118"/>
    </location>
</feature>
<feature type="region of interest" description="Disordered" evidence="2">
    <location>
        <begin position="94"/>
        <end position="118"/>
    </location>
</feature>
<protein>
    <recommendedName>
        <fullName evidence="1">Small ribosomal subunit protein uS13</fullName>
    </recommendedName>
    <alternativeName>
        <fullName evidence="3">30S ribosomal protein S13</fullName>
    </alternativeName>
</protein>
<proteinExistence type="inferred from homology"/>
<gene>
    <name evidence="1" type="primary">rpsM</name>
    <name type="ordered locus">Sden_0192</name>
</gene>
<dbReference type="EMBL" id="CP000302">
    <property type="protein sequence ID" value="ABE53489.1"/>
    <property type="molecule type" value="Genomic_DNA"/>
</dbReference>
<dbReference type="RefSeq" id="WP_011494656.1">
    <property type="nucleotide sequence ID" value="NC_007954.1"/>
</dbReference>
<dbReference type="SMR" id="Q12ST7"/>
<dbReference type="STRING" id="318161.Sden_0192"/>
<dbReference type="KEGG" id="sdn:Sden_0192"/>
<dbReference type="eggNOG" id="COG0099">
    <property type="taxonomic scope" value="Bacteria"/>
</dbReference>
<dbReference type="HOGENOM" id="CLU_103849_1_2_6"/>
<dbReference type="OrthoDB" id="9803610at2"/>
<dbReference type="Proteomes" id="UP000001982">
    <property type="component" value="Chromosome"/>
</dbReference>
<dbReference type="GO" id="GO:0005829">
    <property type="term" value="C:cytosol"/>
    <property type="evidence" value="ECO:0007669"/>
    <property type="project" value="TreeGrafter"/>
</dbReference>
<dbReference type="GO" id="GO:0015935">
    <property type="term" value="C:small ribosomal subunit"/>
    <property type="evidence" value="ECO:0007669"/>
    <property type="project" value="TreeGrafter"/>
</dbReference>
<dbReference type="GO" id="GO:0019843">
    <property type="term" value="F:rRNA binding"/>
    <property type="evidence" value="ECO:0007669"/>
    <property type="project" value="UniProtKB-UniRule"/>
</dbReference>
<dbReference type="GO" id="GO:0003735">
    <property type="term" value="F:structural constituent of ribosome"/>
    <property type="evidence" value="ECO:0007669"/>
    <property type="project" value="InterPro"/>
</dbReference>
<dbReference type="GO" id="GO:0000049">
    <property type="term" value="F:tRNA binding"/>
    <property type="evidence" value="ECO:0007669"/>
    <property type="project" value="UniProtKB-UniRule"/>
</dbReference>
<dbReference type="GO" id="GO:0006412">
    <property type="term" value="P:translation"/>
    <property type="evidence" value="ECO:0007669"/>
    <property type="project" value="UniProtKB-UniRule"/>
</dbReference>
<dbReference type="FunFam" id="1.10.8.50:FF:000001">
    <property type="entry name" value="30S ribosomal protein S13"/>
    <property type="match status" value="1"/>
</dbReference>
<dbReference type="FunFam" id="4.10.910.10:FF:000001">
    <property type="entry name" value="30S ribosomal protein S13"/>
    <property type="match status" value="1"/>
</dbReference>
<dbReference type="Gene3D" id="1.10.8.50">
    <property type="match status" value="1"/>
</dbReference>
<dbReference type="Gene3D" id="4.10.910.10">
    <property type="entry name" value="30s ribosomal protein s13, domain 2"/>
    <property type="match status" value="1"/>
</dbReference>
<dbReference type="HAMAP" id="MF_01315">
    <property type="entry name" value="Ribosomal_uS13"/>
    <property type="match status" value="1"/>
</dbReference>
<dbReference type="InterPro" id="IPR027437">
    <property type="entry name" value="Rbsml_uS13_C"/>
</dbReference>
<dbReference type="InterPro" id="IPR001892">
    <property type="entry name" value="Ribosomal_uS13"/>
</dbReference>
<dbReference type="InterPro" id="IPR010979">
    <property type="entry name" value="Ribosomal_uS13-like_H2TH"/>
</dbReference>
<dbReference type="InterPro" id="IPR019980">
    <property type="entry name" value="Ribosomal_uS13_bac-type"/>
</dbReference>
<dbReference type="InterPro" id="IPR018269">
    <property type="entry name" value="Ribosomal_uS13_CS"/>
</dbReference>
<dbReference type="NCBIfam" id="TIGR03631">
    <property type="entry name" value="uS13_bact"/>
    <property type="match status" value="1"/>
</dbReference>
<dbReference type="PANTHER" id="PTHR10871">
    <property type="entry name" value="30S RIBOSOMAL PROTEIN S13/40S RIBOSOMAL PROTEIN S18"/>
    <property type="match status" value="1"/>
</dbReference>
<dbReference type="PANTHER" id="PTHR10871:SF1">
    <property type="entry name" value="SMALL RIBOSOMAL SUBUNIT PROTEIN US13M"/>
    <property type="match status" value="1"/>
</dbReference>
<dbReference type="Pfam" id="PF00416">
    <property type="entry name" value="Ribosomal_S13"/>
    <property type="match status" value="1"/>
</dbReference>
<dbReference type="PIRSF" id="PIRSF002134">
    <property type="entry name" value="Ribosomal_S13"/>
    <property type="match status" value="1"/>
</dbReference>
<dbReference type="SUPFAM" id="SSF46946">
    <property type="entry name" value="S13-like H2TH domain"/>
    <property type="match status" value="1"/>
</dbReference>
<dbReference type="PROSITE" id="PS00646">
    <property type="entry name" value="RIBOSOMAL_S13_1"/>
    <property type="match status" value="1"/>
</dbReference>
<dbReference type="PROSITE" id="PS50159">
    <property type="entry name" value="RIBOSOMAL_S13_2"/>
    <property type="match status" value="1"/>
</dbReference>
<sequence>MARIAGINIPDQKHTVIALTAIFGIGRTRARAICASTAIAETAKIKELSEAQIDILREEVAKYSVEGDLRREISMNIKRLMDLGCYRGLRHRRSLPLRGQRTKTNARTRKGPRKPIRK</sequence>
<accession>Q12ST7</accession>
<comment type="function">
    <text evidence="1">Located at the top of the head of the 30S subunit, it contacts several helices of the 16S rRNA. In the 70S ribosome it contacts the 23S rRNA (bridge B1a) and protein L5 of the 50S subunit (bridge B1b), connecting the 2 subunits; these bridges are implicated in subunit movement. Contacts the tRNAs in the A and P-sites.</text>
</comment>
<comment type="subunit">
    <text evidence="1">Part of the 30S ribosomal subunit. Forms a loose heterodimer with protein S19. Forms two bridges to the 50S subunit in the 70S ribosome.</text>
</comment>
<comment type="similarity">
    <text evidence="1">Belongs to the universal ribosomal protein uS13 family.</text>
</comment>